<comment type="function">
    <text evidence="1">Moderately activates human somatostatin receptors (SSTR) with a preferential activation of SSTR1 and SSTR4. In vivo, does not cause behavioral changes in mice within a few minutes of intracranial injection, but causes a progressive loss of movement thereafter. Four to five hours after injection, mice recover, even with the highest dose tested. Shows antinociception and antihyperalgesia activities in two mouse models of acute pain, most probably by acting outside the central nervous system.</text>
</comment>
<comment type="subcellular location">
    <subcellularLocation>
        <location evidence="7">Secreted</location>
    </subcellularLocation>
</comment>
<comment type="tissue specificity">
    <text evidence="7">Expressed by the venom duct.</text>
</comment>
<comment type="domain">
    <text evidence="6">The cysteine framework is C-C.</text>
</comment>
<comment type="miscellaneous">
    <text evidence="1">This peptide is an evolutionarily optimized stable analog of somatostatin. In addition, it adopts nearly identical conformations as in the somatostatin drug analog Octreotide. As this drug, it contains a D-Trp at the same position, whose synthesis is a common strategy used for enhancing the metabolic stability of compounds in drug design.</text>
</comment>
<comment type="miscellaneous">
    <text evidence="3">Consomatins evolved by gene duplication of a 'Somatostatin and related peptides (SSRP)' gene expressed in the snail neuroendocrine system.</text>
</comment>
<comment type="miscellaneous">
    <text evidence="1">Negative results: does not activate any of the other 313 GPCRs tested. Shows little or no activating activity at the SSTR2, SSTR3 and SSTR5.</text>
</comment>
<comment type="similarity">
    <text evidence="6">Belongs to the conotoxin C superfamily. Consomatin family.</text>
</comment>
<accession>X5IXY8</accession>
<organism>
    <name type="scientific">Conus geographus</name>
    <name type="common">Geography cone</name>
    <name type="synonym">Nubecula geographus</name>
    <dbReference type="NCBI Taxonomy" id="6491"/>
    <lineage>
        <taxon>Eukaryota</taxon>
        <taxon>Metazoa</taxon>
        <taxon>Spiralia</taxon>
        <taxon>Lophotrochozoa</taxon>
        <taxon>Mollusca</taxon>
        <taxon>Gastropoda</taxon>
        <taxon>Caenogastropoda</taxon>
        <taxon>Neogastropoda</taxon>
        <taxon>Conoidea</taxon>
        <taxon>Conidae</taxon>
        <taxon>Conus</taxon>
        <taxon>Gastridium</taxon>
    </lineage>
</organism>
<protein>
    <recommendedName>
        <fullName evidence="4">Consomatin G2</fullName>
        <shortName evidence="6">ConSST G2</shortName>
    </recommendedName>
    <alternativeName>
        <fullName evidence="5">Somatostatin-related peptide</fullName>
        <shortName evidence="5">SSRP</shortName>
    </alternativeName>
</protein>
<proteinExistence type="evidence at protein level"/>
<reference evidence="10" key="1">
    <citation type="journal article" date="2014" name="Nat. Commun.">
        <title>Evolution of separate predation- and defence-evoked venoms in carnivorous cone snails.</title>
        <authorList>
            <person name="Dutertre S."/>
            <person name="Jin A.-H."/>
            <person name="Vetter I."/>
            <person name="Hamilton B."/>
            <person name="Sunagar K."/>
            <person name="Lavergne V."/>
            <person name="Dutertre V."/>
            <person name="Fry B.G."/>
            <person name="Antunes A."/>
            <person name="Venter D.J."/>
            <person name="Alewood P.F."/>
            <person name="Lewis R.J."/>
        </authorList>
    </citation>
    <scope>NUCLEOTIDE SEQUENCE [MRNA]</scope>
    <source>
        <tissue>Venom duct</tissue>
    </source>
</reference>
<reference key="2">
    <citation type="journal article" date="2022" name="Sci. Adv.">
        <title>Somatostatin venom analogs evolved by fish-hunting cone snails: from prey capture behavior to identifying drug leads.</title>
        <authorList>
            <person name="Ramiro I.B.L."/>
            <person name="Bjoern-Yoshimoto W.E."/>
            <person name="Imperial J.S."/>
            <person name="Gajewiak J."/>
            <person name="Salcedo P.F."/>
            <person name="Watkins M."/>
            <person name="Taylor D."/>
            <person name="Resager W."/>
            <person name="Ueberheide B."/>
            <person name="Braeuner-Osborne H."/>
            <person name="Whitby F.G."/>
            <person name="Hill C.P."/>
            <person name="Martin L.F."/>
            <person name="Patwardhan A."/>
            <person name="Concepcion G.P."/>
            <person name="Olivera B.M."/>
            <person name="Safavi-Hemami H."/>
        </authorList>
    </citation>
    <scope>NUCLEOTIDE SEQUENCE [MRNA]</scope>
    <scope>PROBABLE D-AMINO ACID AT TRP-74</scope>
    <scope>PROBABLE DISULFIDE BOND</scope>
    <source>
        <tissue>Venom duct</tissue>
    </source>
</reference>
<reference key="3">
    <citation type="journal article" date="2022" name="Mol. Biol. Evol.">
        <title>Reconstructing the origins of the somatostatin and allatostatin-C signaling systems using the accelerated evolution of biodiverse cone snail venoms.</title>
        <authorList>
            <person name="Koch T.L."/>
            <person name="Ramiro I.B.L."/>
            <person name="Florez-Salcedo P."/>
            <person name="Engholm E."/>
            <person name="Jensen K.J."/>
            <person name="Chase K."/>
            <person name="Olivera B.M."/>
            <person name="Bjoern-Yoshimoto W.E."/>
            <person name="Safavi-Hemami H."/>
        </authorList>
    </citation>
    <scope>NUCLEOTIDE SEQUENCE [MRNA]</scope>
    <source>
        <tissue>Venom duct</tissue>
    </source>
</reference>
<evidence type="ECO:0000250" key="1">
    <source>
        <dbReference type="UniProtKB" id="P0DQT5"/>
    </source>
</evidence>
<evidence type="ECO:0000255" key="2"/>
<evidence type="ECO:0000269" key="3">
    <source>
    </source>
</evidence>
<evidence type="ECO:0000303" key="4">
    <source>
    </source>
</evidence>
<evidence type="ECO:0000303" key="5">
    <source>
    </source>
</evidence>
<evidence type="ECO:0000305" key="6"/>
<evidence type="ECO:0000305" key="7">
    <source>
    </source>
</evidence>
<evidence type="ECO:0000305" key="8">
    <source>
    </source>
</evidence>
<evidence type="ECO:0000305" key="9">
    <source>
    </source>
</evidence>
<evidence type="ECO:0000312" key="10">
    <source>
        <dbReference type="EMBL" id="BAO65575.1"/>
    </source>
</evidence>
<keyword id="KW-0208">D-amino acid</keyword>
<keyword id="KW-1015">Disulfide bond</keyword>
<keyword id="KW-1213">G-protein coupled receptor impairing toxin</keyword>
<keyword id="KW-0964">Secreted</keyword>
<keyword id="KW-0732">Signal</keyword>
<keyword id="KW-0800">Toxin</keyword>
<dbReference type="EMBL" id="AB910807">
    <property type="protein sequence ID" value="BAO65575.1"/>
    <property type="molecule type" value="mRNA"/>
</dbReference>
<dbReference type="GO" id="GO:0005576">
    <property type="term" value="C:extracellular region"/>
    <property type="evidence" value="ECO:0007669"/>
    <property type="project" value="UniProtKB-SubCell"/>
</dbReference>
<dbReference type="GO" id="GO:0090729">
    <property type="term" value="F:toxin activity"/>
    <property type="evidence" value="ECO:0007669"/>
    <property type="project" value="UniProtKB-KW"/>
</dbReference>
<feature type="signal peptide" evidence="2">
    <location>
        <begin position="1"/>
        <end position="18"/>
    </location>
</feature>
<feature type="propeptide" id="PRO_0000456115" evidence="8 9">
    <location>
        <begin position="19"/>
        <end position="69"/>
    </location>
</feature>
<feature type="peptide" id="PRO_5004956872" description="Consomatin G2">
    <location>
        <begin position="70"/>
        <end position="78"/>
    </location>
</feature>
<feature type="propeptide" id="PRO_0000456116" evidence="8 9">
    <location>
        <begin position="79"/>
        <end position="93"/>
    </location>
</feature>
<feature type="modified residue" description="D-tryptophan" evidence="1 8">
    <location>
        <position position="74"/>
    </location>
</feature>
<feature type="disulfide bond" evidence="1 8">
    <location>
        <begin position="72"/>
        <end position="77"/>
    </location>
</feature>
<sequence>MQTAYWVMLMMMVCITAPLPEGGKPNSGIRGLVPNDLTPQHTLRSLISRRQTDVLLDATLLTTPAPEQRLFCFWKSCTWRPYPWRRRDLNGKR</sequence>
<name>CSST2_CONGE</name>